<evidence type="ECO:0000255" key="1">
    <source>
        <dbReference type="HAMAP-Rule" id="MF_00123"/>
    </source>
</evidence>
<evidence type="ECO:0000256" key="2">
    <source>
        <dbReference type="SAM" id="MobiDB-lite"/>
    </source>
</evidence>
<name>SYR_ANAD2</name>
<comment type="catalytic activity">
    <reaction evidence="1">
        <text>tRNA(Arg) + L-arginine + ATP = L-arginyl-tRNA(Arg) + AMP + diphosphate</text>
        <dbReference type="Rhea" id="RHEA:20301"/>
        <dbReference type="Rhea" id="RHEA-COMP:9658"/>
        <dbReference type="Rhea" id="RHEA-COMP:9673"/>
        <dbReference type="ChEBI" id="CHEBI:30616"/>
        <dbReference type="ChEBI" id="CHEBI:32682"/>
        <dbReference type="ChEBI" id="CHEBI:33019"/>
        <dbReference type="ChEBI" id="CHEBI:78442"/>
        <dbReference type="ChEBI" id="CHEBI:78513"/>
        <dbReference type="ChEBI" id="CHEBI:456215"/>
        <dbReference type="EC" id="6.1.1.19"/>
    </reaction>
</comment>
<comment type="subunit">
    <text evidence="1">Monomer.</text>
</comment>
<comment type="subcellular location">
    <subcellularLocation>
        <location evidence="1">Cytoplasm</location>
    </subcellularLocation>
</comment>
<comment type="similarity">
    <text evidence="1">Belongs to the class-I aminoacyl-tRNA synthetase family.</text>
</comment>
<accession>B8JBE2</accession>
<protein>
    <recommendedName>
        <fullName evidence="1">Arginine--tRNA ligase</fullName>
        <ecNumber evidence="1">6.1.1.19</ecNumber>
    </recommendedName>
    <alternativeName>
        <fullName evidence="1">Arginyl-tRNA synthetase</fullName>
        <shortName evidence="1">ArgRS</shortName>
    </alternativeName>
</protein>
<organism>
    <name type="scientific">Anaeromyxobacter dehalogenans (strain 2CP-1 / ATCC BAA-258)</name>
    <dbReference type="NCBI Taxonomy" id="455488"/>
    <lineage>
        <taxon>Bacteria</taxon>
        <taxon>Pseudomonadati</taxon>
        <taxon>Myxococcota</taxon>
        <taxon>Myxococcia</taxon>
        <taxon>Myxococcales</taxon>
        <taxon>Cystobacterineae</taxon>
        <taxon>Anaeromyxobacteraceae</taxon>
        <taxon>Anaeromyxobacter</taxon>
    </lineage>
</organism>
<feature type="chain" id="PRO_1000198870" description="Arginine--tRNA ligase">
    <location>
        <begin position="1"/>
        <end position="598"/>
    </location>
</feature>
<feature type="region of interest" description="Disordered" evidence="2">
    <location>
        <begin position="288"/>
        <end position="309"/>
    </location>
</feature>
<feature type="short sequence motif" description="'HIGH' region">
    <location>
        <begin position="131"/>
        <end position="141"/>
    </location>
</feature>
<reference key="1">
    <citation type="submission" date="2009-01" db="EMBL/GenBank/DDBJ databases">
        <title>Complete sequence of Anaeromyxobacter dehalogenans 2CP-1.</title>
        <authorList>
            <person name="Lucas S."/>
            <person name="Copeland A."/>
            <person name="Lapidus A."/>
            <person name="Glavina del Rio T."/>
            <person name="Dalin E."/>
            <person name="Tice H."/>
            <person name="Bruce D."/>
            <person name="Goodwin L."/>
            <person name="Pitluck S."/>
            <person name="Saunders E."/>
            <person name="Brettin T."/>
            <person name="Detter J.C."/>
            <person name="Han C."/>
            <person name="Larimer F."/>
            <person name="Land M."/>
            <person name="Hauser L."/>
            <person name="Kyrpides N."/>
            <person name="Ovchinnikova G."/>
            <person name="Beliaev A.S."/>
            <person name="Richardson P."/>
        </authorList>
    </citation>
    <scope>NUCLEOTIDE SEQUENCE [LARGE SCALE GENOMIC DNA]</scope>
    <source>
        <strain>2CP-1 / ATCC BAA-258</strain>
    </source>
</reference>
<keyword id="KW-0030">Aminoacyl-tRNA synthetase</keyword>
<keyword id="KW-0067">ATP-binding</keyword>
<keyword id="KW-0963">Cytoplasm</keyword>
<keyword id="KW-0436">Ligase</keyword>
<keyword id="KW-0547">Nucleotide-binding</keyword>
<keyword id="KW-0648">Protein biosynthesis</keyword>
<dbReference type="EC" id="6.1.1.19" evidence="1"/>
<dbReference type="EMBL" id="CP001359">
    <property type="protein sequence ID" value="ACL65769.1"/>
    <property type="molecule type" value="Genomic_DNA"/>
</dbReference>
<dbReference type="RefSeq" id="WP_012633571.1">
    <property type="nucleotide sequence ID" value="NC_011891.1"/>
</dbReference>
<dbReference type="SMR" id="B8JBE2"/>
<dbReference type="KEGG" id="acp:A2cp1_2431"/>
<dbReference type="HOGENOM" id="CLU_006406_0_1_7"/>
<dbReference type="Proteomes" id="UP000007089">
    <property type="component" value="Chromosome"/>
</dbReference>
<dbReference type="GO" id="GO:0005737">
    <property type="term" value="C:cytoplasm"/>
    <property type="evidence" value="ECO:0007669"/>
    <property type="project" value="UniProtKB-SubCell"/>
</dbReference>
<dbReference type="GO" id="GO:0004814">
    <property type="term" value="F:arginine-tRNA ligase activity"/>
    <property type="evidence" value="ECO:0007669"/>
    <property type="project" value="UniProtKB-UniRule"/>
</dbReference>
<dbReference type="GO" id="GO:0005524">
    <property type="term" value="F:ATP binding"/>
    <property type="evidence" value="ECO:0007669"/>
    <property type="project" value="UniProtKB-UniRule"/>
</dbReference>
<dbReference type="GO" id="GO:0006420">
    <property type="term" value="P:arginyl-tRNA aminoacylation"/>
    <property type="evidence" value="ECO:0007669"/>
    <property type="project" value="UniProtKB-UniRule"/>
</dbReference>
<dbReference type="CDD" id="cd00671">
    <property type="entry name" value="ArgRS_core"/>
    <property type="match status" value="1"/>
</dbReference>
<dbReference type="FunFam" id="1.10.730.10:FF:000008">
    <property type="entry name" value="Arginine--tRNA ligase"/>
    <property type="match status" value="1"/>
</dbReference>
<dbReference type="Gene3D" id="3.30.1360.70">
    <property type="entry name" value="Arginyl tRNA synthetase N-terminal domain"/>
    <property type="match status" value="1"/>
</dbReference>
<dbReference type="Gene3D" id="3.40.50.620">
    <property type="entry name" value="HUPs"/>
    <property type="match status" value="1"/>
</dbReference>
<dbReference type="Gene3D" id="1.10.730.10">
    <property type="entry name" value="Isoleucyl-tRNA Synthetase, Domain 1"/>
    <property type="match status" value="1"/>
</dbReference>
<dbReference type="HAMAP" id="MF_00123">
    <property type="entry name" value="Arg_tRNA_synth"/>
    <property type="match status" value="1"/>
</dbReference>
<dbReference type="InterPro" id="IPR001412">
    <property type="entry name" value="aa-tRNA-synth_I_CS"/>
</dbReference>
<dbReference type="InterPro" id="IPR001278">
    <property type="entry name" value="Arg-tRNA-ligase"/>
</dbReference>
<dbReference type="InterPro" id="IPR005148">
    <property type="entry name" value="Arg-tRNA-synth_N"/>
</dbReference>
<dbReference type="InterPro" id="IPR036695">
    <property type="entry name" value="Arg-tRNA-synth_N_sf"/>
</dbReference>
<dbReference type="InterPro" id="IPR035684">
    <property type="entry name" value="ArgRS_core"/>
</dbReference>
<dbReference type="InterPro" id="IPR008909">
    <property type="entry name" value="DALR_anticod-bd"/>
</dbReference>
<dbReference type="InterPro" id="IPR014729">
    <property type="entry name" value="Rossmann-like_a/b/a_fold"/>
</dbReference>
<dbReference type="InterPro" id="IPR009080">
    <property type="entry name" value="tRNAsynth_Ia_anticodon-bd"/>
</dbReference>
<dbReference type="PANTHER" id="PTHR11956:SF5">
    <property type="entry name" value="ARGININE--TRNA LIGASE, CYTOPLASMIC"/>
    <property type="match status" value="1"/>
</dbReference>
<dbReference type="PANTHER" id="PTHR11956">
    <property type="entry name" value="ARGINYL-TRNA SYNTHETASE"/>
    <property type="match status" value="1"/>
</dbReference>
<dbReference type="Pfam" id="PF03485">
    <property type="entry name" value="Arg_tRNA_synt_N"/>
    <property type="match status" value="1"/>
</dbReference>
<dbReference type="Pfam" id="PF05746">
    <property type="entry name" value="DALR_1"/>
    <property type="match status" value="1"/>
</dbReference>
<dbReference type="Pfam" id="PF00750">
    <property type="entry name" value="tRNA-synt_1d"/>
    <property type="match status" value="1"/>
</dbReference>
<dbReference type="PRINTS" id="PR01038">
    <property type="entry name" value="TRNASYNTHARG"/>
</dbReference>
<dbReference type="SMART" id="SM01016">
    <property type="entry name" value="Arg_tRNA_synt_N"/>
    <property type="match status" value="1"/>
</dbReference>
<dbReference type="SMART" id="SM00836">
    <property type="entry name" value="DALR_1"/>
    <property type="match status" value="1"/>
</dbReference>
<dbReference type="SUPFAM" id="SSF47323">
    <property type="entry name" value="Anticodon-binding domain of a subclass of class I aminoacyl-tRNA synthetases"/>
    <property type="match status" value="1"/>
</dbReference>
<dbReference type="SUPFAM" id="SSF55190">
    <property type="entry name" value="Arginyl-tRNA synthetase (ArgRS), N-terminal 'additional' domain"/>
    <property type="match status" value="1"/>
</dbReference>
<dbReference type="SUPFAM" id="SSF52374">
    <property type="entry name" value="Nucleotidylyl transferase"/>
    <property type="match status" value="1"/>
</dbReference>
<dbReference type="PROSITE" id="PS00178">
    <property type="entry name" value="AA_TRNA_LIGASE_I"/>
    <property type="match status" value="1"/>
</dbReference>
<gene>
    <name evidence="1" type="primary">argS</name>
    <name type="ordered locus">A2cp1_2431</name>
</gene>
<proteinExistence type="inferred from homology"/>
<sequence length="598" mass="65535">MVRDRVIELFRKALAQGADDGRWPAAGAGFSVEAPRDPKHGDFAVNAAMVLAKQAGRPPRELAQAIVEAVRAADTAGDLAGLEIAGPGFINVRLSPDLWLRTLARAVAEGPDYGRTAVGQGKKVIVEYVSANPTGPMHVGHGRNAVVGDGVQGLLRWAGFDVTREYYVNDYGAQVQTLARSVHLRYQELHGRTVTMPPKSYPGEYVKDIAAGLKAEYGARFLDAPEAEWLTLFRDHSVQHVLGMIRGDLAAVNISFDRWSSEKALYESGTVDRFLRFLEEKDLVYVGKLPPPKSKKGQPPPQPQPDEEGVTAAEDLTLFRSSAYGDEVDRPVKKADGTPTYFCADIAYHWDKRQRADALVDVLGADHGGYVPRLEAAMEALGASRKDLHVVLIQMVSLMRGGESVKMSKRAGTLVSLREVVDEVGRDATRFIFLTRRSDAPLDFDVELAKRQTLDNPVFYVQYGHARLAAIFQKAREAGHAVPDFDLEAARTLASPEEQDLIRRIAAFPDMLAAAALAYEPHRVAFYLQETIAAFHSWYTQGKKSGEKVIGPDPVKTAARLFLCRALKQVLANGLAVLGVSAPDRMESPETRDIADDV</sequence>